<gene>
    <name evidence="1" type="primary">nadK</name>
    <name type="ordered locus">VV0824</name>
</gene>
<evidence type="ECO:0000255" key="1">
    <source>
        <dbReference type="HAMAP-Rule" id="MF_00361"/>
    </source>
</evidence>
<reference key="1">
    <citation type="journal article" date="2003" name="Genome Res.">
        <title>Comparative genome analysis of Vibrio vulnificus, a marine pathogen.</title>
        <authorList>
            <person name="Chen C.-Y."/>
            <person name="Wu K.-M."/>
            <person name="Chang Y.-C."/>
            <person name="Chang C.-H."/>
            <person name="Tsai H.-C."/>
            <person name="Liao T.-L."/>
            <person name="Liu Y.-M."/>
            <person name="Chen H.-J."/>
            <person name="Shen A.B.-T."/>
            <person name="Li J.-C."/>
            <person name="Su T.-L."/>
            <person name="Shao C.-P."/>
            <person name="Lee C.-T."/>
            <person name="Hor L.-I."/>
            <person name="Tsai S.-F."/>
        </authorList>
    </citation>
    <scope>NUCLEOTIDE SEQUENCE [LARGE SCALE GENOMIC DNA]</scope>
    <source>
        <strain>YJ016</strain>
    </source>
</reference>
<keyword id="KW-0067">ATP-binding</keyword>
<keyword id="KW-0963">Cytoplasm</keyword>
<keyword id="KW-0418">Kinase</keyword>
<keyword id="KW-0520">NAD</keyword>
<keyword id="KW-0521">NADP</keyword>
<keyword id="KW-0547">Nucleotide-binding</keyword>
<keyword id="KW-0808">Transferase</keyword>
<accession>Q7MN93</accession>
<protein>
    <recommendedName>
        <fullName evidence="1">NAD kinase</fullName>
        <ecNumber evidence="1">2.7.1.23</ecNumber>
    </recommendedName>
    <alternativeName>
        <fullName evidence="1">ATP-dependent NAD kinase</fullName>
    </alternativeName>
</protein>
<sequence>MKKPFNVIAIIGKPRDQQAIQTHRDLYHWLSSLGYQVFIDDRLSAILNDVPEEHFSGLVELGEKADLAIVVGGDGNMLGAARILSRFNTRVIGVNRGNLGFLTDLNPEDFQHSLKAVLDGAYIEEERFLLEAEIHRHGQVKSHNAALNEAVLHPGQVAHMIEFEVYIDESFAFSLRADGLIVSTPTGSTAYSLSGGGPILSPSLNAISLVPMFPHTLSSRPLVVDGNRRIKLLVSPDNRGTQEVSCDGQVSLPVSPGDEIHIYQSPNRLRLIHPKDYSYYHVLRNKLGWSSKLF</sequence>
<organism>
    <name type="scientific">Vibrio vulnificus (strain YJ016)</name>
    <dbReference type="NCBI Taxonomy" id="196600"/>
    <lineage>
        <taxon>Bacteria</taxon>
        <taxon>Pseudomonadati</taxon>
        <taxon>Pseudomonadota</taxon>
        <taxon>Gammaproteobacteria</taxon>
        <taxon>Vibrionales</taxon>
        <taxon>Vibrionaceae</taxon>
        <taxon>Vibrio</taxon>
    </lineage>
</organism>
<dbReference type="EC" id="2.7.1.23" evidence="1"/>
<dbReference type="EMBL" id="BA000037">
    <property type="protein sequence ID" value="BAC93588.1"/>
    <property type="molecule type" value="Genomic_DNA"/>
</dbReference>
<dbReference type="RefSeq" id="WP_011149649.1">
    <property type="nucleotide sequence ID" value="NC_005139.1"/>
</dbReference>
<dbReference type="SMR" id="Q7MN93"/>
<dbReference type="STRING" id="672.VV93_v1c07640"/>
<dbReference type="KEGG" id="vvy:VV0824"/>
<dbReference type="eggNOG" id="COG0061">
    <property type="taxonomic scope" value="Bacteria"/>
</dbReference>
<dbReference type="HOGENOM" id="CLU_008831_0_1_6"/>
<dbReference type="Proteomes" id="UP000002675">
    <property type="component" value="Chromosome I"/>
</dbReference>
<dbReference type="GO" id="GO:0005737">
    <property type="term" value="C:cytoplasm"/>
    <property type="evidence" value="ECO:0007669"/>
    <property type="project" value="UniProtKB-SubCell"/>
</dbReference>
<dbReference type="GO" id="GO:0005524">
    <property type="term" value="F:ATP binding"/>
    <property type="evidence" value="ECO:0007669"/>
    <property type="project" value="UniProtKB-KW"/>
</dbReference>
<dbReference type="GO" id="GO:0046872">
    <property type="term" value="F:metal ion binding"/>
    <property type="evidence" value="ECO:0007669"/>
    <property type="project" value="UniProtKB-UniRule"/>
</dbReference>
<dbReference type="GO" id="GO:0051287">
    <property type="term" value="F:NAD binding"/>
    <property type="evidence" value="ECO:0007669"/>
    <property type="project" value="UniProtKB-ARBA"/>
</dbReference>
<dbReference type="GO" id="GO:0003951">
    <property type="term" value="F:NAD+ kinase activity"/>
    <property type="evidence" value="ECO:0007669"/>
    <property type="project" value="UniProtKB-UniRule"/>
</dbReference>
<dbReference type="GO" id="GO:0019674">
    <property type="term" value="P:NAD metabolic process"/>
    <property type="evidence" value="ECO:0007669"/>
    <property type="project" value="InterPro"/>
</dbReference>
<dbReference type="GO" id="GO:0006741">
    <property type="term" value="P:NADP biosynthetic process"/>
    <property type="evidence" value="ECO:0007669"/>
    <property type="project" value="UniProtKB-UniRule"/>
</dbReference>
<dbReference type="FunFam" id="2.60.200.30:FF:000001">
    <property type="entry name" value="NAD kinase"/>
    <property type="match status" value="1"/>
</dbReference>
<dbReference type="Gene3D" id="3.40.50.10330">
    <property type="entry name" value="Probable inorganic polyphosphate/atp-NAD kinase, domain 1"/>
    <property type="match status" value="1"/>
</dbReference>
<dbReference type="Gene3D" id="2.60.200.30">
    <property type="entry name" value="Probable inorganic polyphosphate/atp-NAD kinase, domain 2"/>
    <property type="match status" value="1"/>
</dbReference>
<dbReference type="HAMAP" id="MF_00361">
    <property type="entry name" value="NAD_kinase"/>
    <property type="match status" value="1"/>
</dbReference>
<dbReference type="InterPro" id="IPR017438">
    <property type="entry name" value="ATP-NAD_kinase_N"/>
</dbReference>
<dbReference type="InterPro" id="IPR017437">
    <property type="entry name" value="ATP-NAD_kinase_PpnK-typ_C"/>
</dbReference>
<dbReference type="InterPro" id="IPR016064">
    <property type="entry name" value="NAD/diacylglycerol_kinase_sf"/>
</dbReference>
<dbReference type="InterPro" id="IPR002504">
    <property type="entry name" value="NADK"/>
</dbReference>
<dbReference type="NCBIfam" id="NF002306">
    <property type="entry name" value="PRK01231.1"/>
    <property type="match status" value="1"/>
</dbReference>
<dbReference type="NCBIfam" id="NF002893">
    <property type="entry name" value="PRK03378.1"/>
    <property type="match status" value="1"/>
</dbReference>
<dbReference type="PANTHER" id="PTHR20275">
    <property type="entry name" value="NAD KINASE"/>
    <property type="match status" value="1"/>
</dbReference>
<dbReference type="PANTHER" id="PTHR20275:SF0">
    <property type="entry name" value="NAD KINASE"/>
    <property type="match status" value="1"/>
</dbReference>
<dbReference type="Pfam" id="PF01513">
    <property type="entry name" value="NAD_kinase"/>
    <property type="match status" value="1"/>
</dbReference>
<dbReference type="Pfam" id="PF20143">
    <property type="entry name" value="NAD_kinase_C"/>
    <property type="match status" value="1"/>
</dbReference>
<dbReference type="SUPFAM" id="SSF111331">
    <property type="entry name" value="NAD kinase/diacylglycerol kinase-like"/>
    <property type="match status" value="1"/>
</dbReference>
<proteinExistence type="inferred from homology"/>
<comment type="function">
    <text evidence="1">Involved in the regulation of the intracellular balance of NAD and NADP, and is a key enzyme in the biosynthesis of NADP. Catalyzes specifically the phosphorylation on 2'-hydroxyl of the adenosine moiety of NAD to yield NADP.</text>
</comment>
<comment type="catalytic activity">
    <reaction evidence="1">
        <text>NAD(+) + ATP = ADP + NADP(+) + H(+)</text>
        <dbReference type="Rhea" id="RHEA:18629"/>
        <dbReference type="ChEBI" id="CHEBI:15378"/>
        <dbReference type="ChEBI" id="CHEBI:30616"/>
        <dbReference type="ChEBI" id="CHEBI:57540"/>
        <dbReference type="ChEBI" id="CHEBI:58349"/>
        <dbReference type="ChEBI" id="CHEBI:456216"/>
        <dbReference type="EC" id="2.7.1.23"/>
    </reaction>
</comment>
<comment type="cofactor">
    <cofactor evidence="1">
        <name>a divalent metal cation</name>
        <dbReference type="ChEBI" id="CHEBI:60240"/>
    </cofactor>
</comment>
<comment type="subcellular location">
    <subcellularLocation>
        <location evidence="1">Cytoplasm</location>
    </subcellularLocation>
</comment>
<comment type="similarity">
    <text evidence="1">Belongs to the NAD kinase family.</text>
</comment>
<name>NADK_VIBVY</name>
<feature type="chain" id="PRO_0000120689" description="NAD kinase">
    <location>
        <begin position="1"/>
        <end position="294"/>
    </location>
</feature>
<feature type="active site" description="Proton acceptor" evidence="1">
    <location>
        <position position="74"/>
    </location>
</feature>
<feature type="binding site" evidence="1">
    <location>
        <begin position="74"/>
        <end position="75"/>
    </location>
    <ligand>
        <name>NAD(+)</name>
        <dbReference type="ChEBI" id="CHEBI:57540"/>
    </ligand>
</feature>
<feature type="binding site" evidence="1">
    <location>
        <begin position="148"/>
        <end position="149"/>
    </location>
    <ligand>
        <name>NAD(+)</name>
        <dbReference type="ChEBI" id="CHEBI:57540"/>
    </ligand>
</feature>
<feature type="binding site" evidence="1">
    <location>
        <position position="159"/>
    </location>
    <ligand>
        <name>NAD(+)</name>
        <dbReference type="ChEBI" id="CHEBI:57540"/>
    </ligand>
</feature>
<feature type="binding site" evidence="1">
    <location>
        <position position="176"/>
    </location>
    <ligand>
        <name>NAD(+)</name>
        <dbReference type="ChEBI" id="CHEBI:57540"/>
    </ligand>
</feature>
<feature type="binding site" evidence="1">
    <location>
        <position position="178"/>
    </location>
    <ligand>
        <name>NAD(+)</name>
        <dbReference type="ChEBI" id="CHEBI:57540"/>
    </ligand>
</feature>
<feature type="binding site" evidence="1">
    <location>
        <begin position="189"/>
        <end position="194"/>
    </location>
    <ligand>
        <name>NAD(+)</name>
        <dbReference type="ChEBI" id="CHEBI:57540"/>
    </ligand>
</feature>
<feature type="binding site" evidence="1">
    <location>
        <position position="249"/>
    </location>
    <ligand>
        <name>NAD(+)</name>
        <dbReference type="ChEBI" id="CHEBI:57540"/>
    </ligand>
</feature>